<dbReference type="EMBL" id="AY648727">
    <property type="protein sequence ID" value="AAT68045.1"/>
    <property type="molecule type" value="mRNA"/>
</dbReference>
<dbReference type="EMBL" id="BC092952">
    <property type="protein sequence ID" value="AAH92952.1"/>
    <property type="molecule type" value="mRNA"/>
</dbReference>
<dbReference type="RefSeq" id="NP_001003860.1">
    <property type="nucleotide sequence ID" value="NM_001003860.1"/>
</dbReference>
<dbReference type="SMR" id="Q567Z7"/>
<dbReference type="FunCoup" id="Q567Z7">
    <property type="interactions" value="2808"/>
</dbReference>
<dbReference type="STRING" id="7955.ENSDARP00000015461"/>
<dbReference type="PaxDb" id="7955-ENSDARP00000015461"/>
<dbReference type="GeneID" id="445383"/>
<dbReference type="KEGG" id="dre:445383"/>
<dbReference type="AGR" id="ZFIN:ZDB-GENE-040720-3"/>
<dbReference type="CTD" id="8896"/>
<dbReference type="ZFIN" id="ZDB-GENE-040720-3">
    <property type="gene designation" value="bud31"/>
</dbReference>
<dbReference type="eggNOG" id="KOG3404">
    <property type="taxonomic scope" value="Eukaryota"/>
</dbReference>
<dbReference type="InParanoid" id="Q567Z7"/>
<dbReference type="OrthoDB" id="277109at2759"/>
<dbReference type="PhylomeDB" id="Q567Z7"/>
<dbReference type="TreeFam" id="TF105609"/>
<dbReference type="Reactome" id="R-DRE-72163">
    <property type="pathway name" value="mRNA Splicing - Major Pathway"/>
</dbReference>
<dbReference type="PRO" id="PR:Q567Z7"/>
<dbReference type="Proteomes" id="UP000000437">
    <property type="component" value="Chromosome 3"/>
</dbReference>
<dbReference type="GO" id="GO:0005681">
    <property type="term" value="C:spliceosomal complex"/>
    <property type="evidence" value="ECO:0000318"/>
    <property type="project" value="GO_Central"/>
</dbReference>
<dbReference type="GO" id="GO:0000398">
    <property type="term" value="P:mRNA splicing, via spliceosome"/>
    <property type="evidence" value="ECO:0000318"/>
    <property type="project" value="GO_Central"/>
</dbReference>
<dbReference type="InterPro" id="IPR001748">
    <property type="entry name" value="BUD31"/>
</dbReference>
<dbReference type="InterPro" id="IPR018230">
    <property type="entry name" value="BUD31/G10-rel_CS"/>
</dbReference>
<dbReference type="PANTHER" id="PTHR19411:SF0">
    <property type="entry name" value="PROTEIN BUD31 HOMOLOG"/>
    <property type="match status" value="1"/>
</dbReference>
<dbReference type="PANTHER" id="PTHR19411">
    <property type="entry name" value="PROTEIN BUD31-RELATED"/>
    <property type="match status" value="1"/>
</dbReference>
<dbReference type="Pfam" id="PF01125">
    <property type="entry name" value="BUD31"/>
    <property type="match status" value="1"/>
</dbReference>
<dbReference type="PRINTS" id="PR00322">
    <property type="entry name" value="G10"/>
</dbReference>
<dbReference type="PROSITE" id="PS00997">
    <property type="entry name" value="G10_1"/>
    <property type="match status" value="1"/>
</dbReference>
<dbReference type="PROSITE" id="PS00998">
    <property type="entry name" value="G10_2"/>
    <property type="match status" value="1"/>
</dbReference>
<keyword id="KW-0507">mRNA processing</keyword>
<keyword id="KW-0508">mRNA splicing</keyword>
<keyword id="KW-0539">Nucleus</keyword>
<keyword id="KW-1185">Reference proteome</keyword>
<keyword id="KW-0747">Spliceosome</keyword>
<proteinExistence type="evidence at transcript level"/>
<sequence length="144" mass="16951">MPKVKRSRKPPPDGWELVEPTLDELDQKMREAETEPHEGKRKVESLWPIFRLHHQRSRYIFDLFYKRKAISRELYKYCIRGGYADKNLIAKWKKQGYENLCCLRCIQTRDTNFGTNCICRVPKGKLEVGRIIECTHCGCRGCSG</sequence>
<feature type="chain" id="PRO_0000223628" description="Protein BUD31 homolog">
    <location>
        <begin position="1"/>
        <end position="144"/>
    </location>
</feature>
<feature type="short sequence motif" description="Nuclear localization signal" evidence="2">
    <location>
        <begin position="2"/>
        <end position="10"/>
    </location>
</feature>
<feature type="sequence conflict" description="In Ref. 1; AAT68045." evidence="3" ref="1">
    <original>V</original>
    <variation>I</variation>
    <location>
        <position position="18"/>
    </location>
</feature>
<feature type="sequence conflict" description="In Ref. 1; AAT68045." evidence="3" ref="1">
    <original>K</original>
    <variation>E</variation>
    <location>
        <position position="76"/>
    </location>
</feature>
<feature type="sequence conflict" description="In Ref. 1; AAT68045." evidence="3" ref="1">
    <original>G</original>
    <variation>E</variation>
    <location>
        <position position="81"/>
    </location>
</feature>
<accession>Q567Z7</accession>
<accession>Q6DRN2</accession>
<comment type="function">
    <text evidence="1">Involved in pre-mRNA splicing process.</text>
</comment>
<comment type="subunit">
    <text evidence="1">Identified in the spliceosome C complex.</text>
</comment>
<comment type="subcellular location">
    <subcellularLocation>
        <location evidence="1">Nucleus</location>
    </subcellularLocation>
</comment>
<comment type="similarity">
    <text evidence="3">Belongs to the BUD31 (G10) family.</text>
</comment>
<protein>
    <recommendedName>
        <fullName>Protein BUD31 homolog</fullName>
    </recommendedName>
    <alternativeName>
        <fullName>Protein G10 homolog</fullName>
    </alternativeName>
</protein>
<name>BUD31_DANRE</name>
<organism>
    <name type="scientific">Danio rerio</name>
    <name type="common">Zebrafish</name>
    <name type="synonym">Brachydanio rerio</name>
    <dbReference type="NCBI Taxonomy" id="7955"/>
    <lineage>
        <taxon>Eukaryota</taxon>
        <taxon>Metazoa</taxon>
        <taxon>Chordata</taxon>
        <taxon>Craniata</taxon>
        <taxon>Vertebrata</taxon>
        <taxon>Euteleostomi</taxon>
        <taxon>Actinopterygii</taxon>
        <taxon>Neopterygii</taxon>
        <taxon>Teleostei</taxon>
        <taxon>Ostariophysi</taxon>
        <taxon>Cypriniformes</taxon>
        <taxon>Danionidae</taxon>
        <taxon>Danioninae</taxon>
        <taxon>Danio</taxon>
    </lineage>
</organism>
<gene>
    <name type="primary">bud31</name>
    <name type="ORF">zgc:110615</name>
</gene>
<evidence type="ECO:0000250" key="1">
    <source>
        <dbReference type="UniProtKB" id="P41223"/>
    </source>
</evidence>
<evidence type="ECO:0000255" key="2"/>
<evidence type="ECO:0000305" key="3"/>
<reference key="1">
    <citation type="journal article" date="2004" name="Proc. Natl. Acad. Sci. U.S.A.">
        <title>Identification of 315 genes essential for early zebrafish development.</title>
        <authorList>
            <person name="Amsterdam A."/>
            <person name="Nissen R.M."/>
            <person name="Sun Z."/>
            <person name="Swindell E.C."/>
            <person name="Farrington S."/>
            <person name="Hopkins N."/>
        </authorList>
    </citation>
    <scope>NUCLEOTIDE SEQUENCE [LARGE SCALE MRNA]</scope>
</reference>
<reference key="2">
    <citation type="submission" date="2005-04" db="EMBL/GenBank/DDBJ databases">
        <authorList>
            <consortium name="NIH - Zebrafish Gene Collection (ZGC) project"/>
        </authorList>
    </citation>
    <scope>NUCLEOTIDE SEQUENCE [LARGE SCALE MRNA]</scope>
    <source>
        <tissue>Embryo</tissue>
    </source>
</reference>